<gene>
    <name evidence="3" type="primary">irx5</name>
</gene>
<reference evidence="9" key="1">
    <citation type="submission" date="2005-06" db="EMBL/GenBank/DDBJ databases">
        <title>Sequence of Xenopus tropicalis development genes.</title>
        <authorList>
            <person name="Qin S."/>
            <person name="Dors M."/>
            <person name="Johnson E."/>
            <person name="Bloom S."/>
            <person name="Hood L."/>
            <person name="Rowen L."/>
        </authorList>
    </citation>
    <scope>NUCLEOTIDE SEQUENCE [GENOMIC DNA]</scope>
</reference>
<reference evidence="8" key="2">
    <citation type="journal article" date="2009" name="Dev. Biol.">
        <title>The Xenopus Irx genes are essential for neural patterning and define the border between prethalamus and thalamus through mutual antagonism with the anterior repressors Fezf and Arx.</title>
        <authorList>
            <person name="Rodriguez-Seguel E."/>
            <person name="Alarcon P."/>
            <person name="Gomez-Skarmeta J.L."/>
        </authorList>
    </citation>
    <scope>FUNCTION</scope>
    <scope>TISSUE SPECIFICITY</scope>
</reference>
<sequence>MSYPQGYLYQPSASLALYSCPAYSTTVISGPRTDELGRSPSGSAFSPYAGSTAFTASSAGFNSPLQYSGDPAAAFTSYVGSPYDHSAGMAGSLGYHPYAAPLGTYPYGDPAYRKNATRDATATLKAWLNEHRKNPYPTKGEKIMLAIITKMTLTQVSTWFANARRRLKKENKMTWTPRNRSEDEEDDENIDLEKNEEDDPRKLEEKGDQDGDAGDQKRSPSAVDFDRLEGEVRQGKELDQTRSDSEQNEVEERNDLLSKNSAPPTSPLCPPDQSPQAQEDQNLHRHTVHNHHHQSIQQLHHHSHQSHPLDLVHRNALVQHGPVTNNATSVIHSPPASTSKPKLWSLAEIATSSDKVKESSDAAAVAGTTPAQSMVVSASSPSRSPSAQCHFPSNTVLSRPLYYSNPFYPGYTNYGTFSHLHSHHGPSTTSPTVNSTHHFSGINQTVLNRAEALAKECKLRSQSQADLNKDTPYEMKKGMSSI</sequence>
<organism>
    <name type="scientific">Xenopus tropicalis</name>
    <name type="common">Western clawed frog</name>
    <name type="synonym">Silurana tropicalis</name>
    <dbReference type="NCBI Taxonomy" id="8364"/>
    <lineage>
        <taxon>Eukaryota</taxon>
        <taxon>Metazoa</taxon>
        <taxon>Chordata</taxon>
        <taxon>Craniata</taxon>
        <taxon>Vertebrata</taxon>
        <taxon>Euteleostomi</taxon>
        <taxon>Amphibia</taxon>
        <taxon>Batrachia</taxon>
        <taxon>Anura</taxon>
        <taxon>Pipoidea</taxon>
        <taxon>Pipidae</taxon>
        <taxon>Xenopodinae</taxon>
        <taxon>Xenopus</taxon>
        <taxon>Silurana</taxon>
    </lineage>
</organism>
<name>IRX5_XENTR</name>
<comment type="function">
    <text evidence="1 7">Acts partially redundantly with other irx members in neural patterning. Required for formation of the posterior forebrain, midbrain, hindbrain, and to a lesser extent, spinal cord. Patterns the neuroectoderm in both the anterior/posterior and dorsal/ventral axes. Does not appear to play a role in pronephros kidney development. Involved in craniofacial and gonadal development (By similarity). Modulates the migration of progenitor cell populations in branchial arches and gonads by repressing CXCL12.</text>
</comment>
<comment type="subcellular location">
    <subcellularLocation>
        <location evidence="4 8">Nucleus</location>
    </subcellularLocation>
</comment>
<comment type="tissue specificity">
    <text evidence="7">Expressed in the neural plate in overlapping patterns with other irx members, which all share an anterior border of expression. Broadly expressed in the tailbud rhombencephalon (hindbrain). Outside the nervous system and at tailbud stages, expressed in the developing otic vesicle and branchial arches.</text>
</comment>
<comment type="similarity">
    <text evidence="4">Belongs to the TALE/IRO homeobox family.</text>
</comment>
<keyword id="KW-0217">Developmental protein</keyword>
<keyword id="KW-0221">Differentiation</keyword>
<keyword id="KW-0238">DNA-binding</keyword>
<keyword id="KW-0371">Homeobox</keyword>
<keyword id="KW-0524">Neurogenesis</keyword>
<keyword id="KW-0539">Nucleus</keyword>
<keyword id="KW-1185">Reference proteome</keyword>
<keyword id="KW-0804">Transcription</keyword>
<keyword id="KW-0805">Transcription regulation</keyword>
<accession>Q4LDQ3</accession>
<feature type="chain" id="PRO_0000388722" description="Iroquois-class homeodomain protein irx-5">
    <location>
        <begin position="1"/>
        <end position="482"/>
    </location>
</feature>
<feature type="DNA-binding region" description="Homeobox" evidence="5">
    <location>
        <begin position="109"/>
        <end position="171"/>
    </location>
</feature>
<feature type="region of interest" description="Disordered" evidence="6">
    <location>
        <begin position="173"/>
        <end position="307"/>
    </location>
</feature>
<feature type="region of interest" description="Disordered" evidence="6">
    <location>
        <begin position="462"/>
        <end position="482"/>
    </location>
</feature>
<feature type="compositionally biased region" description="Acidic residues" evidence="6">
    <location>
        <begin position="182"/>
        <end position="198"/>
    </location>
</feature>
<feature type="compositionally biased region" description="Basic and acidic residues" evidence="6">
    <location>
        <begin position="199"/>
        <end position="256"/>
    </location>
</feature>
<feature type="compositionally biased region" description="Pro residues" evidence="6">
    <location>
        <begin position="264"/>
        <end position="273"/>
    </location>
</feature>
<feature type="compositionally biased region" description="Basic residues" evidence="6">
    <location>
        <begin position="284"/>
        <end position="305"/>
    </location>
</feature>
<feature type="compositionally biased region" description="Basic and acidic residues" evidence="6">
    <location>
        <begin position="467"/>
        <end position="482"/>
    </location>
</feature>
<dbReference type="EMBL" id="AC160824">
    <property type="protein sequence ID" value="AAY89592.1"/>
    <property type="molecule type" value="Genomic_DNA"/>
</dbReference>
<dbReference type="SMR" id="Q4LDQ3"/>
<dbReference type="FunCoup" id="Q4LDQ3">
    <property type="interactions" value="1135"/>
</dbReference>
<dbReference type="STRING" id="8364.ENSXETP00000007335"/>
<dbReference type="PaxDb" id="8364-ENSXETP00000006137"/>
<dbReference type="eggNOG" id="KOG0773">
    <property type="taxonomic scope" value="Eukaryota"/>
</dbReference>
<dbReference type="HOGENOM" id="CLU_048118_0_0_1"/>
<dbReference type="InParanoid" id="Q4LDQ3"/>
<dbReference type="Proteomes" id="UP000008143">
    <property type="component" value="Unplaced"/>
</dbReference>
<dbReference type="GO" id="GO:0005737">
    <property type="term" value="C:cytoplasm"/>
    <property type="evidence" value="ECO:0000250"/>
    <property type="project" value="UniProtKB"/>
</dbReference>
<dbReference type="GO" id="GO:0005634">
    <property type="term" value="C:nucleus"/>
    <property type="evidence" value="ECO:0000250"/>
    <property type="project" value="UniProtKB"/>
</dbReference>
<dbReference type="GO" id="GO:0003677">
    <property type="term" value="F:DNA binding"/>
    <property type="evidence" value="ECO:0007669"/>
    <property type="project" value="UniProtKB-KW"/>
</dbReference>
<dbReference type="GO" id="GO:0000981">
    <property type="term" value="F:DNA-binding transcription factor activity, RNA polymerase II-specific"/>
    <property type="evidence" value="ECO:0007669"/>
    <property type="project" value="InterPro"/>
</dbReference>
<dbReference type="GO" id="GO:0007420">
    <property type="term" value="P:brain development"/>
    <property type="evidence" value="ECO:0000250"/>
    <property type="project" value="UniProtKB"/>
</dbReference>
<dbReference type="GO" id="GO:0030154">
    <property type="term" value="P:cell differentiation"/>
    <property type="evidence" value="ECO:0007669"/>
    <property type="project" value="UniProtKB-KW"/>
</dbReference>
<dbReference type="GO" id="GO:0009953">
    <property type="term" value="P:dorsal/ventral pattern formation"/>
    <property type="evidence" value="ECO:0000250"/>
    <property type="project" value="UniProtKB"/>
</dbReference>
<dbReference type="GO" id="GO:0048701">
    <property type="term" value="P:embryonic cranial skeleton morphogenesis"/>
    <property type="evidence" value="ECO:0000250"/>
    <property type="project" value="UniProtKB"/>
</dbReference>
<dbReference type="GO" id="GO:0008406">
    <property type="term" value="P:gonad development"/>
    <property type="evidence" value="ECO:0000250"/>
    <property type="project" value="UniProtKB"/>
</dbReference>
<dbReference type="GO" id="GO:0009954">
    <property type="term" value="P:proximal/distal pattern formation"/>
    <property type="evidence" value="ECO:0000250"/>
    <property type="project" value="UniProtKB"/>
</dbReference>
<dbReference type="CDD" id="cd00086">
    <property type="entry name" value="homeodomain"/>
    <property type="match status" value="1"/>
</dbReference>
<dbReference type="FunFam" id="1.10.10.60:FF:000003">
    <property type="entry name" value="Iroquois-class homeobox protein IRX"/>
    <property type="match status" value="1"/>
</dbReference>
<dbReference type="Gene3D" id="1.10.10.60">
    <property type="entry name" value="Homeodomain-like"/>
    <property type="match status" value="1"/>
</dbReference>
<dbReference type="InterPro" id="IPR001356">
    <property type="entry name" value="HD"/>
</dbReference>
<dbReference type="InterPro" id="IPR017970">
    <property type="entry name" value="Homeobox_CS"/>
</dbReference>
<dbReference type="InterPro" id="IPR009057">
    <property type="entry name" value="Homeodomain-like_sf"/>
</dbReference>
<dbReference type="InterPro" id="IPR003893">
    <property type="entry name" value="Iroquois_homeo"/>
</dbReference>
<dbReference type="InterPro" id="IPR008422">
    <property type="entry name" value="KN_HD"/>
</dbReference>
<dbReference type="PANTHER" id="PTHR11211">
    <property type="entry name" value="IROQUOIS-CLASS HOMEODOMAIN PROTEIN IRX"/>
    <property type="match status" value="1"/>
</dbReference>
<dbReference type="PANTHER" id="PTHR11211:SF17">
    <property type="entry name" value="IROQUOIS-CLASS HOMEODOMAIN PROTEIN IRX-5"/>
    <property type="match status" value="1"/>
</dbReference>
<dbReference type="Pfam" id="PF05920">
    <property type="entry name" value="Homeobox_KN"/>
    <property type="match status" value="1"/>
</dbReference>
<dbReference type="SMART" id="SM00389">
    <property type="entry name" value="HOX"/>
    <property type="match status" value="1"/>
</dbReference>
<dbReference type="SMART" id="SM00548">
    <property type="entry name" value="IRO"/>
    <property type="match status" value="1"/>
</dbReference>
<dbReference type="SUPFAM" id="SSF46689">
    <property type="entry name" value="Homeodomain-like"/>
    <property type="match status" value="1"/>
</dbReference>
<dbReference type="PROSITE" id="PS00027">
    <property type="entry name" value="HOMEOBOX_1"/>
    <property type="match status" value="1"/>
</dbReference>
<dbReference type="PROSITE" id="PS50071">
    <property type="entry name" value="HOMEOBOX_2"/>
    <property type="match status" value="1"/>
</dbReference>
<evidence type="ECO:0000250" key="1"/>
<evidence type="ECO:0000250" key="2">
    <source>
        <dbReference type="UniProtKB" id="P78411"/>
    </source>
</evidence>
<evidence type="ECO:0000250" key="3">
    <source>
        <dbReference type="UniProtKB" id="Q90XW5"/>
    </source>
</evidence>
<evidence type="ECO:0000255" key="4"/>
<evidence type="ECO:0000255" key="5">
    <source>
        <dbReference type="PROSITE-ProRule" id="PRU00108"/>
    </source>
</evidence>
<evidence type="ECO:0000256" key="6">
    <source>
        <dbReference type="SAM" id="MobiDB-lite"/>
    </source>
</evidence>
<evidence type="ECO:0000269" key="7">
    <source>
    </source>
</evidence>
<evidence type="ECO:0000305" key="8"/>
<evidence type="ECO:0000312" key="9">
    <source>
        <dbReference type="EMBL" id="AAY89592.1"/>
    </source>
</evidence>
<protein>
    <recommendedName>
        <fullName evidence="3">Iroquois-class homeodomain protein irx-5</fullName>
    </recommendedName>
    <alternativeName>
        <fullName evidence="2">Iroquois homeobox protein 5</fullName>
    </alternativeName>
</protein>
<proteinExistence type="evidence at transcript level"/>